<sequence length="295" mass="32774">MPELPEVEVVRAGLERHVLGATIARVDVLHPRPVRRDLRGPAGFAAALTGRRIEAARRRGKYLWLPLDNGDALLGHLGMSGQLLVQPPDAPDERHLRVRLALEGADEGRELRFVDQRMFGGLSVSAGGADLPPEIAHIARDPLDPEFDDDDFVRRVRRRTSGVKRQLLDQNLISGVGNIYADEALWRARIHGERPGDRLTATRVRELLAHAREVMLAALGEGGTSFDALYVNVNGESGYFDRSLHAYGREGEACERCGTPIRRVAFMNRSSYFCPVCQPAPRRRRAASSRVRVPD</sequence>
<proteinExistence type="inferred from homology"/>
<reference key="1">
    <citation type="submission" date="2006-12" db="EMBL/GenBank/DDBJ databases">
        <title>Complete sequence of chromosome 1 of Nocardioides sp. JS614.</title>
        <authorList>
            <person name="Copeland A."/>
            <person name="Lucas S."/>
            <person name="Lapidus A."/>
            <person name="Barry K."/>
            <person name="Detter J.C."/>
            <person name="Glavina del Rio T."/>
            <person name="Hammon N."/>
            <person name="Israni S."/>
            <person name="Dalin E."/>
            <person name="Tice H."/>
            <person name="Pitluck S."/>
            <person name="Thompson L.S."/>
            <person name="Brettin T."/>
            <person name="Bruce D."/>
            <person name="Han C."/>
            <person name="Tapia R."/>
            <person name="Schmutz J."/>
            <person name="Larimer F."/>
            <person name="Land M."/>
            <person name="Hauser L."/>
            <person name="Kyrpides N."/>
            <person name="Kim E."/>
            <person name="Mattes T."/>
            <person name="Gossett J."/>
            <person name="Richardson P."/>
        </authorList>
    </citation>
    <scope>NUCLEOTIDE SEQUENCE [LARGE SCALE GENOMIC DNA]</scope>
    <source>
        <strain>ATCC BAA-499 / JS614</strain>
    </source>
</reference>
<feature type="initiator methionine" description="Removed" evidence="1">
    <location>
        <position position="1"/>
    </location>
</feature>
<feature type="chain" id="PRO_1000008728" description="Formamidopyrimidine-DNA glycosylase">
    <location>
        <begin position="2"/>
        <end position="295"/>
    </location>
</feature>
<feature type="zinc finger region" description="FPG-type" evidence="2">
    <location>
        <begin position="245"/>
        <end position="279"/>
    </location>
</feature>
<feature type="active site" description="Schiff-base intermediate with DNA" evidence="2">
    <location>
        <position position="2"/>
    </location>
</feature>
<feature type="active site" description="Proton donor" evidence="2">
    <location>
        <position position="3"/>
    </location>
</feature>
<feature type="active site" description="Proton donor; for beta-elimination activity" evidence="2">
    <location>
        <position position="61"/>
    </location>
</feature>
<feature type="active site" description="Proton donor; for delta-elimination activity" evidence="2">
    <location>
        <position position="269"/>
    </location>
</feature>
<feature type="binding site" evidence="2">
    <location>
        <position position="95"/>
    </location>
    <ligand>
        <name>DNA</name>
        <dbReference type="ChEBI" id="CHEBI:16991"/>
    </ligand>
</feature>
<feature type="binding site" evidence="2">
    <location>
        <position position="117"/>
    </location>
    <ligand>
        <name>DNA</name>
        <dbReference type="ChEBI" id="CHEBI:16991"/>
    </ligand>
</feature>
<feature type="binding site" evidence="2">
    <location>
        <position position="159"/>
    </location>
    <ligand>
        <name>DNA</name>
        <dbReference type="ChEBI" id="CHEBI:16991"/>
    </ligand>
</feature>
<keyword id="KW-0227">DNA damage</keyword>
<keyword id="KW-0234">DNA repair</keyword>
<keyword id="KW-0238">DNA-binding</keyword>
<keyword id="KW-0326">Glycosidase</keyword>
<keyword id="KW-0378">Hydrolase</keyword>
<keyword id="KW-0456">Lyase</keyword>
<keyword id="KW-0479">Metal-binding</keyword>
<keyword id="KW-0511">Multifunctional enzyme</keyword>
<keyword id="KW-1185">Reference proteome</keyword>
<keyword id="KW-0862">Zinc</keyword>
<keyword id="KW-0863">Zinc-finger</keyword>
<name>FPG_NOCSJ</name>
<evidence type="ECO:0000250" key="1"/>
<evidence type="ECO:0000255" key="2">
    <source>
        <dbReference type="HAMAP-Rule" id="MF_00103"/>
    </source>
</evidence>
<accession>A1SLU7</accession>
<gene>
    <name evidence="2" type="primary">mutM</name>
    <name evidence="2" type="synonym">fpg</name>
    <name type="ordered locus">Noca_3280</name>
</gene>
<comment type="function">
    <text evidence="2">Involved in base excision repair of DNA damaged by oxidation or by mutagenic agents. Acts as a DNA glycosylase that recognizes and removes damaged bases. Has a preference for oxidized purines, such as 7,8-dihydro-8-oxoguanine (8-oxoG). Has AP (apurinic/apyrimidinic) lyase activity and introduces nicks in the DNA strand. Cleaves the DNA backbone by beta-delta elimination to generate a single-strand break at the site of the removed base with both 3'- and 5'-phosphates.</text>
</comment>
<comment type="catalytic activity">
    <reaction evidence="2">
        <text>Hydrolysis of DNA containing ring-opened 7-methylguanine residues, releasing 2,6-diamino-4-hydroxy-5-(N-methyl)formamidopyrimidine.</text>
        <dbReference type="EC" id="3.2.2.23"/>
    </reaction>
</comment>
<comment type="catalytic activity">
    <reaction evidence="2">
        <text>2'-deoxyribonucleotide-(2'-deoxyribose 5'-phosphate)-2'-deoxyribonucleotide-DNA = a 3'-end 2'-deoxyribonucleotide-(2,3-dehydro-2,3-deoxyribose 5'-phosphate)-DNA + a 5'-end 5'-phospho-2'-deoxyribonucleoside-DNA + H(+)</text>
        <dbReference type="Rhea" id="RHEA:66592"/>
        <dbReference type="Rhea" id="RHEA-COMP:13180"/>
        <dbReference type="Rhea" id="RHEA-COMP:16897"/>
        <dbReference type="Rhea" id="RHEA-COMP:17067"/>
        <dbReference type="ChEBI" id="CHEBI:15378"/>
        <dbReference type="ChEBI" id="CHEBI:136412"/>
        <dbReference type="ChEBI" id="CHEBI:157695"/>
        <dbReference type="ChEBI" id="CHEBI:167181"/>
        <dbReference type="EC" id="4.2.99.18"/>
    </reaction>
</comment>
<comment type="cofactor">
    <cofactor evidence="2">
        <name>Zn(2+)</name>
        <dbReference type="ChEBI" id="CHEBI:29105"/>
    </cofactor>
    <text evidence="2">Binds 1 zinc ion per subunit.</text>
</comment>
<comment type="subunit">
    <text evidence="2">Monomer.</text>
</comment>
<comment type="similarity">
    <text evidence="2">Belongs to the FPG family.</text>
</comment>
<protein>
    <recommendedName>
        <fullName evidence="2">Formamidopyrimidine-DNA glycosylase</fullName>
        <shortName evidence="2">Fapy-DNA glycosylase</shortName>
        <ecNumber evidence="2">3.2.2.23</ecNumber>
    </recommendedName>
    <alternativeName>
        <fullName evidence="2">DNA-(apurinic or apyrimidinic site) lyase MutM</fullName>
        <shortName evidence="2">AP lyase MutM</shortName>
        <ecNumber evidence="2">4.2.99.18</ecNumber>
    </alternativeName>
</protein>
<organism>
    <name type="scientific">Nocardioides sp. (strain ATCC BAA-499 / JS614)</name>
    <dbReference type="NCBI Taxonomy" id="196162"/>
    <lineage>
        <taxon>Bacteria</taxon>
        <taxon>Bacillati</taxon>
        <taxon>Actinomycetota</taxon>
        <taxon>Actinomycetes</taxon>
        <taxon>Propionibacteriales</taxon>
        <taxon>Nocardioidaceae</taxon>
        <taxon>Nocardioides</taxon>
    </lineage>
</organism>
<dbReference type="EC" id="3.2.2.23" evidence="2"/>
<dbReference type="EC" id="4.2.99.18" evidence="2"/>
<dbReference type="EMBL" id="CP000509">
    <property type="protein sequence ID" value="ABL82782.1"/>
    <property type="molecule type" value="Genomic_DNA"/>
</dbReference>
<dbReference type="RefSeq" id="WP_011756716.1">
    <property type="nucleotide sequence ID" value="NC_008699.1"/>
</dbReference>
<dbReference type="SMR" id="A1SLU7"/>
<dbReference type="STRING" id="196162.Noca_3280"/>
<dbReference type="KEGG" id="nca:Noca_3280"/>
<dbReference type="eggNOG" id="COG0266">
    <property type="taxonomic scope" value="Bacteria"/>
</dbReference>
<dbReference type="HOGENOM" id="CLU_038423_1_2_11"/>
<dbReference type="OrthoDB" id="9800855at2"/>
<dbReference type="Proteomes" id="UP000000640">
    <property type="component" value="Chromosome"/>
</dbReference>
<dbReference type="GO" id="GO:0034039">
    <property type="term" value="F:8-oxo-7,8-dihydroguanine DNA N-glycosylase activity"/>
    <property type="evidence" value="ECO:0007669"/>
    <property type="project" value="TreeGrafter"/>
</dbReference>
<dbReference type="GO" id="GO:0140078">
    <property type="term" value="F:class I DNA-(apurinic or apyrimidinic site) endonuclease activity"/>
    <property type="evidence" value="ECO:0007669"/>
    <property type="project" value="UniProtKB-EC"/>
</dbReference>
<dbReference type="GO" id="GO:0003684">
    <property type="term" value="F:damaged DNA binding"/>
    <property type="evidence" value="ECO:0007669"/>
    <property type="project" value="InterPro"/>
</dbReference>
<dbReference type="GO" id="GO:0008270">
    <property type="term" value="F:zinc ion binding"/>
    <property type="evidence" value="ECO:0007669"/>
    <property type="project" value="UniProtKB-UniRule"/>
</dbReference>
<dbReference type="GO" id="GO:0006284">
    <property type="term" value="P:base-excision repair"/>
    <property type="evidence" value="ECO:0007669"/>
    <property type="project" value="InterPro"/>
</dbReference>
<dbReference type="CDD" id="cd08966">
    <property type="entry name" value="EcFpg-like_N"/>
    <property type="match status" value="1"/>
</dbReference>
<dbReference type="FunFam" id="1.10.8.50:FF:000003">
    <property type="entry name" value="Formamidopyrimidine-DNA glycosylase"/>
    <property type="match status" value="1"/>
</dbReference>
<dbReference type="Gene3D" id="1.10.8.50">
    <property type="match status" value="1"/>
</dbReference>
<dbReference type="Gene3D" id="3.20.190.10">
    <property type="entry name" value="MutM-like, N-terminal"/>
    <property type="match status" value="1"/>
</dbReference>
<dbReference type="HAMAP" id="MF_00103">
    <property type="entry name" value="Fapy_DNA_glycosyl"/>
    <property type="match status" value="1"/>
</dbReference>
<dbReference type="InterPro" id="IPR015886">
    <property type="entry name" value="DNA_glyclase/AP_lyase_DNA-bd"/>
</dbReference>
<dbReference type="InterPro" id="IPR015887">
    <property type="entry name" value="DNA_glyclase_Znf_dom_DNA_BS"/>
</dbReference>
<dbReference type="InterPro" id="IPR020629">
    <property type="entry name" value="Formamido-pyr_DNA_Glyclase"/>
</dbReference>
<dbReference type="InterPro" id="IPR012319">
    <property type="entry name" value="FPG_cat"/>
</dbReference>
<dbReference type="InterPro" id="IPR035937">
    <property type="entry name" value="MutM-like_N-ter"/>
</dbReference>
<dbReference type="InterPro" id="IPR010979">
    <property type="entry name" value="Ribosomal_uS13-like_H2TH"/>
</dbReference>
<dbReference type="InterPro" id="IPR000214">
    <property type="entry name" value="Znf_DNA_glyclase/AP_lyase"/>
</dbReference>
<dbReference type="InterPro" id="IPR010663">
    <property type="entry name" value="Znf_FPG/IleRS"/>
</dbReference>
<dbReference type="NCBIfam" id="TIGR00577">
    <property type="entry name" value="fpg"/>
    <property type="match status" value="1"/>
</dbReference>
<dbReference type="NCBIfam" id="NF002211">
    <property type="entry name" value="PRK01103.1"/>
    <property type="match status" value="1"/>
</dbReference>
<dbReference type="PANTHER" id="PTHR22993">
    <property type="entry name" value="FORMAMIDOPYRIMIDINE-DNA GLYCOSYLASE"/>
    <property type="match status" value="1"/>
</dbReference>
<dbReference type="PANTHER" id="PTHR22993:SF9">
    <property type="entry name" value="FORMAMIDOPYRIMIDINE-DNA GLYCOSYLASE"/>
    <property type="match status" value="1"/>
</dbReference>
<dbReference type="Pfam" id="PF01149">
    <property type="entry name" value="Fapy_DNA_glyco"/>
    <property type="match status" value="1"/>
</dbReference>
<dbReference type="Pfam" id="PF06831">
    <property type="entry name" value="H2TH"/>
    <property type="match status" value="1"/>
</dbReference>
<dbReference type="Pfam" id="PF06827">
    <property type="entry name" value="zf-FPG_IleRS"/>
    <property type="match status" value="1"/>
</dbReference>
<dbReference type="SMART" id="SM00898">
    <property type="entry name" value="Fapy_DNA_glyco"/>
    <property type="match status" value="1"/>
</dbReference>
<dbReference type="SMART" id="SM01232">
    <property type="entry name" value="H2TH"/>
    <property type="match status" value="1"/>
</dbReference>
<dbReference type="SUPFAM" id="SSF57716">
    <property type="entry name" value="Glucocorticoid receptor-like (DNA-binding domain)"/>
    <property type="match status" value="1"/>
</dbReference>
<dbReference type="SUPFAM" id="SSF81624">
    <property type="entry name" value="N-terminal domain of MutM-like DNA repair proteins"/>
    <property type="match status" value="1"/>
</dbReference>
<dbReference type="SUPFAM" id="SSF46946">
    <property type="entry name" value="S13-like H2TH domain"/>
    <property type="match status" value="1"/>
</dbReference>
<dbReference type="PROSITE" id="PS51068">
    <property type="entry name" value="FPG_CAT"/>
    <property type="match status" value="1"/>
</dbReference>
<dbReference type="PROSITE" id="PS01242">
    <property type="entry name" value="ZF_FPG_1"/>
    <property type="match status" value="1"/>
</dbReference>
<dbReference type="PROSITE" id="PS51066">
    <property type="entry name" value="ZF_FPG_2"/>
    <property type="match status" value="1"/>
</dbReference>